<gene>
    <name evidence="1" type="primary">dapA</name>
    <name type="ordered locus">BT_0777</name>
</gene>
<reference key="1">
    <citation type="journal article" date="2007" name="Nat. Genet.">
        <title>Genomic analysis of Bartonella identifies type IV secretion systems as host adaptability factors.</title>
        <authorList>
            <person name="Saenz H.L."/>
            <person name="Engel P."/>
            <person name="Stoeckli M.C."/>
            <person name="Lanz C."/>
            <person name="Raddatz G."/>
            <person name="Vayssier-Taussat M."/>
            <person name="Birtles R."/>
            <person name="Schuster S.C."/>
            <person name="Dehio C."/>
        </authorList>
    </citation>
    <scope>NUCLEOTIDE SEQUENCE [LARGE SCALE GENOMIC DNA]</scope>
    <source>
        <strain>CIP 105476 / IBS 506</strain>
    </source>
</reference>
<name>DAPA_BART1</name>
<protein>
    <recommendedName>
        <fullName evidence="1">4-hydroxy-tetrahydrodipicolinate synthase</fullName>
        <shortName evidence="1">HTPA synthase</shortName>
        <ecNumber evidence="1">4.3.3.7</ecNumber>
    </recommendedName>
</protein>
<proteinExistence type="inferred from homology"/>
<comment type="function">
    <text evidence="1">Catalyzes the condensation of (S)-aspartate-beta-semialdehyde [(S)-ASA] and pyruvate to 4-hydroxy-tetrahydrodipicolinate (HTPA).</text>
</comment>
<comment type="catalytic activity">
    <reaction evidence="1">
        <text>L-aspartate 4-semialdehyde + pyruvate = (2S,4S)-4-hydroxy-2,3,4,5-tetrahydrodipicolinate + H2O + H(+)</text>
        <dbReference type="Rhea" id="RHEA:34171"/>
        <dbReference type="ChEBI" id="CHEBI:15361"/>
        <dbReference type="ChEBI" id="CHEBI:15377"/>
        <dbReference type="ChEBI" id="CHEBI:15378"/>
        <dbReference type="ChEBI" id="CHEBI:67139"/>
        <dbReference type="ChEBI" id="CHEBI:537519"/>
        <dbReference type="EC" id="4.3.3.7"/>
    </reaction>
</comment>
<comment type="pathway">
    <text evidence="1">Amino-acid biosynthesis; L-lysine biosynthesis via DAP pathway; (S)-tetrahydrodipicolinate from L-aspartate: step 3/4.</text>
</comment>
<comment type="subunit">
    <text evidence="1">Homotetramer; dimer of dimers.</text>
</comment>
<comment type="subcellular location">
    <subcellularLocation>
        <location evidence="1">Cytoplasm</location>
    </subcellularLocation>
</comment>
<comment type="similarity">
    <text evidence="1">Belongs to the DapA family.</text>
</comment>
<comment type="caution">
    <text evidence="2">Was originally thought to be a dihydrodipicolinate synthase (DHDPS), catalyzing the condensation of (S)-aspartate-beta-semialdehyde [(S)-ASA] and pyruvate to dihydrodipicolinate (DHDP). However, it was shown in E.coli that the product of the enzymatic reaction is not dihydrodipicolinate but in fact (4S)-4-hydroxy-2,3,4,5-tetrahydro-(2S)-dipicolinic acid (HTPA), and that the consecutive dehydration reaction leading to DHDP is not spontaneous but catalyzed by DapB.</text>
</comment>
<keyword id="KW-0028">Amino-acid biosynthesis</keyword>
<keyword id="KW-0963">Cytoplasm</keyword>
<keyword id="KW-0220">Diaminopimelate biosynthesis</keyword>
<keyword id="KW-0456">Lyase</keyword>
<keyword id="KW-0457">Lysine biosynthesis</keyword>
<keyword id="KW-0704">Schiff base</keyword>
<sequence>MLKGAITALITPFDHKGAIDERAFCDFVEWQITQGINGVSPVGTTGESATLSHEEHKQIIELCVEQVAKRVPVVAGAGSNSTSEAIELAQHAEKAGADAVLVVTPYYNRPNQSGLYKHFSSIAKAVSIPIIIYNIPGRSVIDMAVETMRDLYQNFNNIIGVKDATSRIERVSEQGEKCGKDFVQLSGDDCTALGFNAHGGVGCISVSSNVAPKLCAELQAACFHGDYKTARELNDRLMPLNRAVFIEPSPAGIKYAAAKLGLCGETVRSPIVPLTESTKKIIDEALSHAGLLKA</sequence>
<feature type="chain" id="PRO_1000080523" description="4-hydroxy-tetrahydrodipicolinate synthase">
    <location>
        <begin position="1"/>
        <end position="294"/>
    </location>
</feature>
<feature type="active site" description="Proton donor/acceptor" evidence="1">
    <location>
        <position position="133"/>
    </location>
</feature>
<feature type="active site" description="Schiff-base intermediate with substrate" evidence="1">
    <location>
        <position position="162"/>
    </location>
</feature>
<feature type="binding site" evidence="1">
    <location>
        <position position="45"/>
    </location>
    <ligand>
        <name>pyruvate</name>
        <dbReference type="ChEBI" id="CHEBI:15361"/>
    </ligand>
</feature>
<feature type="binding site" evidence="1">
    <location>
        <position position="204"/>
    </location>
    <ligand>
        <name>pyruvate</name>
        <dbReference type="ChEBI" id="CHEBI:15361"/>
    </ligand>
</feature>
<feature type="site" description="Part of a proton relay during catalysis" evidence="1">
    <location>
        <position position="44"/>
    </location>
</feature>
<feature type="site" description="Part of a proton relay during catalysis" evidence="1">
    <location>
        <position position="107"/>
    </location>
</feature>
<evidence type="ECO:0000255" key="1">
    <source>
        <dbReference type="HAMAP-Rule" id="MF_00418"/>
    </source>
</evidence>
<evidence type="ECO:0000305" key="2"/>
<accession>A9IRK3</accession>
<organism>
    <name type="scientific">Bartonella tribocorum (strain CIP 105476 / IBS 506)</name>
    <dbReference type="NCBI Taxonomy" id="382640"/>
    <lineage>
        <taxon>Bacteria</taxon>
        <taxon>Pseudomonadati</taxon>
        <taxon>Pseudomonadota</taxon>
        <taxon>Alphaproteobacteria</taxon>
        <taxon>Hyphomicrobiales</taxon>
        <taxon>Bartonellaceae</taxon>
        <taxon>Bartonella</taxon>
    </lineage>
</organism>
<dbReference type="EC" id="4.3.3.7" evidence="1"/>
<dbReference type="EMBL" id="AM260525">
    <property type="protein sequence ID" value="CAK01192.1"/>
    <property type="molecule type" value="Genomic_DNA"/>
</dbReference>
<dbReference type="RefSeq" id="WP_012231305.1">
    <property type="nucleotide sequence ID" value="NC_010161.1"/>
</dbReference>
<dbReference type="SMR" id="A9IRK3"/>
<dbReference type="KEGG" id="btr:BT_0777"/>
<dbReference type="eggNOG" id="COG0329">
    <property type="taxonomic scope" value="Bacteria"/>
</dbReference>
<dbReference type="HOGENOM" id="CLU_049343_7_0_5"/>
<dbReference type="UniPathway" id="UPA00034">
    <property type="reaction ID" value="UER00017"/>
</dbReference>
<dbReference type="Proteomes" id="UP000001592">
    <property type="component" value="Chromosome"/>
</dbReference>
<dbReference type="GO" id="GO:0005829">
    <property type="term" value="C:cytosol"/>
    <property type="evidence" value="ECO:0007669"/>
    <property type="project" value="TreeGrafter"/>
</dbReference>
<dbReference type="GO" id="GO:0008840">
    <property type="term" value="F:4-hydroxy-tetrahydrodipicolinate synthase activity"/>
    <property type="evidence" value="ECO:0007669"/>
    <property type="project" value="UniProtKB-UniRule"/>
</dbReference>
<dbReference type="GO" id="GO:0019877">
    <property type="term" value="P:diaminopimelate biosynthetic process"/>
    <property type="evidence" value="ECO:0007669"/>
    <property type="project" value="UniProtKB-UniRule"/>
</dbReference>
<dbReference type="GO" id="GO:0009089">
    <property type="term" value="P:lysine biosynthetic process via diaminopimelate"/>
    <property type="evidence" value="ECO:0007669"/>
    <property type="project" value="UniProtKB-UniRule"/>
</dbReference>
<dbReference type="CDD" id="cd00950">
    <property type="entry name" value="DHDPS"/>
    <property type="match status" value="1"/>
</dbReference>
<dbReference type="Gene3D" id="3.20.20.70">
    <property type="entry name" value="Aldolase class I"/>
    <property type="match status" value="1"/>
</dbReference>
<dbReference type="HAMAP" id="MF_00418">
    <property type="entry name" value="DapA"/>
    <property type="match status" value="1"/>
</dbReference>
<dbReference type="InterPro" id="IPR013785">
    <property type="entry name" value="Aldolase_TIM"/>
</dbReference>
<dbReference type="InterPro" id="IPR005263">
    <property type="entry name" value="DapA"/>
</dbReference>
<dbReference type="InterPro" id="IPR002220">
    <property type="entry name" value="DapA-like"/>
</dbReference>
<dbReference type="InterPro" id="IPR020625">
    <property type="entry name" value="Schiff_base-form_aldolases_AS"/>
</dbReference>
<dbReference type="NCBIfam" id="TIGR00674">
    <property type="entry name" value="dapA"/>
    <property type="match status" value="1"/>
</dbReference>
<dbReference type="PANTHER" id="PTHR12128:SF66">
    <property type="entry name" value="4-HYDROXY-2-OXOGLUTARATE ALDOLASE, MITOCHONDRIAL"/>
    <property type="match status" value="1"/>
</dbReference>
<dbReference type="PANTHER" id="PTHR12128">
    <property type="entry name" value="DIHYDRODIPICOLINATE SYNTHASE"/>
    <property type="match status" value="1"/>
</dbReference>
<dbReference type="Pfam" id="PF00701">
    <property type="entry name" value="DHDPS"/>
    <property type="match status" value="1"/>
</dbReference>
<dbReference type="PIRSF" id="PIRSF001365">
    <property type="entry name" value="DHDPS"/>
    <property type="match status" value="1"/>
</dbReference>
<dbReference type="PRINTS" id="PR00146">
    <property type="entry name" value="DHPICSNTHASE"/>
</dbReference>
<dbReference type="SMART" id="SM01130">
    <property type="entry name" value="DHDPS"/>
    <property type="match status" value="1"/>
</dbReference>
<dbReference type="SUPFAM" id="SSF51569">
    <property type="entry name" value="Aldolase"/>
    <property type="match status" value="1"/>
</dbReference>
<dbReference type="PROSITE" id="PS00666">
    <property type="entry name" value="DHDPS_2"/>
    <property type="match status" value="1"/>
</dbReference>